<organism>
    <name type="scientific">Synechococcus sp. (strain RCC307)</name>
    <dbReference type="NCBI Taxonomy" id="316278"/>
    <lineage>
        <taxon>Bacteria</taxon>
        <taxon>Bacillati</taxon>
        <taxon>Cyanobacteriota</taxon>
        <taxon>Cyanophyceae</taxon>
        <taxon>Synechococcales</taxon>
        <taxon>Synechococcaceae</taxon>
        <taxon>Synechococcus</taxon>
    </lineage>
</organism>
<comment type="function">
    <text evidence="1">Involved in mRNA degradation. Catalyzes the phosphorolysis of single-stranded polyribonucleotides processively in the 3'- to 5'-direction.</text>
</comment>
<comment type="catalytic activity">
    <reaction evidence="1">
        <text>RNA(n+1) + phosphate = RNA(n) + a ribonucleoside 5'-diphosphate</text>
        <dbReference type="Rhea" id="RHEA:22096"/>
        <dbReference type="Rhea" id="RHEA-COMP:14527"/>
        <dbReference type="Rhea" id="RHEA-COMP:17342"/>
        <dbReference type="ChEBI" id="CHEBI:43474"/>
        <dbReference type="ChEBI" id="CHEBI:57930"/>
        <dbReference type="ChEBI" id="CHEBI:140395"/>
        <dbReference type="EC" id="2.7.7.8"/>
    </reaction>
</comment>
<comment type="cofactor">
    <cofactor evidence="1">
        <name>Mg(2+)</name>
        <dbReference type="ChEBI" id="CHEBI:18420"/>
    </cofactor>
</comment>
<comment type="subcellular location">
    <subcellularLocation>
        <location evidence="1">Cytoplasm</location>
    </subcellularLocation>
</comment>
<comment type="similarity">
    <text evidence="1">Belongs to the polyribonucleotide nucleotidyltransferase family.</text>
</comment>
<dbReference type="EC" id="2.7.7.8" evidence="1"/>
<dbReference type="EMBL" id="CT978603">
    <property type="protein sequence ID" value="CAK27446.1"/>
    <property type="molecule type" value="Genomic_DNA"/>
</dbReference>
<dbReference type="SMR" id="A5GRD7"/>
<dbReference type="STRING" id="316278.SynRCC307_0543"/>
<dbReference type="KEGG" id="syr:SynRCC307_0543"/>
<dbReference type="eggNOG" id="COG1185">
    <property type="taxonomic scope" value="Bacteria"/>
</dbReference>
<dbReference type="HOGENOM" id="CLU_004217_2_2_3"/>
<dbReference type="OrthoDB" id="9804305at2"/>
<dbReference type="Proteomes" id="UP000001115">
    <property type="component" value="Chromosome"/>
</dbReference>
<dbReference type="GO" id="GO:0005829">
    <property type="term" value="C:cytosol"/>
    <property type="evidence" value="ECO:0007669"/>
    <property type="project" value="TreeGrafter"/>
</dbReference>
<dbReference type="GO" id="GO:0000175">
    <property type="term" value="F:3'-5'-RNA exonuclease activity"/>
    <property type="evidence" value="ECO:0007669"/>
    <property type="project" value="TreeGrafter"/>
</dbReference>
<dbReference type="GO" id="GO:0000287">
    <property type="term" value="F:magnesium ion binding"/>
    <property type="evidence" value="ECO:0007669"/>
    <property type="project" value="UniProtKB-UniRule"/>
</dbReference>
<dbReference type="GO" id="GO:0004654">
    <property type="term" value="F:polyribonucleotide nucleotidyltransferase activity"/>
    <property type="evidence" value="ECO:0007669"/>
    <property type="project" value="UniProtKB-UniRule"/>
</dbReference>
<dbReference type="GO" id="GO:0003723">
    <property type="term" value="F:RNA binding"/>
    <property type="evidence" value="ECO:0007669"/>
    <property type="project" value="UniProtKB-UniRule"/>
</dbReference>
<dbReference type="GO" id="GO:0006402">
    <property type="term" value="P:mRNA catabolic process"/>
    <property type="evidence" value="ECO:0007669"/>
    <property type="project" value="UniProtKB-UniRule"/>
</dbReference>
<dbReference type="GO" id="GO:0006396">
    <property type="term" value="P:RNA processing"/>
    <property type="evidence" value="ECO:0007669"/>
    <property type="project" value="InterPro"/>
</dbReference>
<dbReference type="CDD" id="cd02393">
    <property type="entry name" value="KH-I_PNPase"/>
    <property type="match status" value="1"/>
</dbReference>
<dbReference type="CDD" id="cd11363">
    <property type="entry name" value="RNase_PH_PNPase_1"/>
    <property type="match status" value="1"/>
</dbReference>
<dbReference type="CDD" id="cd11364">
    <property type="entry name" value="RNase_PH_PNPase_2"/>
    <property type="match status" value="1"/>
</dbReference>
<dbReference type="CDD" id="cd04472">
    <property type="entry name" value="S1_PNPase"/>
    <property type="match status" value="1"/>
</dbReference>
<dbReference type="FunFam" id="2.40.50.140:FF:000023">
    <property type="entry name" value="Polyribonucleotide nucleotidyltransferase"/>
    <property type="match status" value="1"/>
</dbReference>
<dbReference type="FunFam" id="3.30.1370.10:FF:000001">
    <property type="entry name" value="Polyribonucleotide nucleotidyltransferase"/>
    <property type="match status" value="1"/>
</dbReference>
<dbReference type="FunFam" id="3.30.230.70:FF:000001">
    <property type="entry name" value="Polyribonucleotide nucleotidyltransferase"/>
    <property type="match status" value="1"/>
</dbReference>
<dbReference type="FunFam" id="3.30.230.70:FF:000002">
    <property type="entry name" value="Polyribonucleotide nucleotidyltransferase"/>
    <property type="match status" value="1"/>
</dbReference>
<dbReference type="Gene3D" id="3.30.230.70">
    <property type="entry name" value="GHMP Kinase, N-terminal domain"/>
    <property type="match status" value="2"/>
</dbReference>
<dbReference type="Gene3D" id="3.30.1370.10">
    <property type="entry name" value="K Homology domain, type 1"/>
    <property type="match status" value="1"/>
</dbReference>
<dbReference type="Gene3D" id="2.40.50.140">
    <property type="entry name" value="Nucleic acid-binding proteins"/>
    <property type="match status" value="1"/>
</dbReference>
<dbReference type="HAMAP" id="MF_01595">
    <property type="entry name" value="PNPase"/>
    <property type="match status" value="1"/>
</dbReference>
<dbReference type="InterPro" id="IPR001247">
    <property type="entry name" value="ExoRNase_PH_dom1"/>
</dbReference>
<dbReference type="InterPro" id="IPR015847">
    <property type="entry name" value="ExoRNase_PH_dom2"/>
</dbReference>
<dbReference type="InterPro" id="IPR036345">
    <property type="entry name" value="ExoRNase_PH_dom2_sf"/>
</dbReference>
<dbReference type="InterPro" id="IPR004087">
    <property type="entry name" value="KH_dom"/>
</dbReference>
<dbReference type="InterPro" id="IPR004088">
    <property type="entry name" value="KH_dom_type_1"/>
</dbReference>
<dbReference type="InterPro" id="IPR036612">
    <property type="entry name" value="KH_dom_type_1_sf"/>
</dbReference>
<dbReference type="InterPro" id="IPR012340">
    <property type="entry name" value="NA-bd_OB-fold"/>
</dbReference>
<dbReference type="InterPro" id="IPR012162">
    <property type="entry name" value="PNPase"/>
</dbReference>
<dbReference type="InterPro" id="IPR027408">
    <property type="entry name" value="PNPase/RNase_PH_dom_sf"/>
</dbReference>
<dbReference type="InterPro" id="IPR015848">
    <property type="entry name" value="PNPase_PH_RNA-bd_bac/org-type"/>
</dbReference>
<dbReference type="InterPro" id="IPR036456">
    <property type="entry name" value="PNPase_PH_RNA-bd_sf"/>
</dbReference>
<dbReference type="InterPro" id="IPR020568">
    <property type="entry name" value="Ribosomal_Su5_D2-typ_SF"/>
</dbReference>
<dbReference type="InterPro" id="IPR003029">
    <property type="entry name" value="S1_domain"/>
</dbReference>
<dbReference type="NCBIfam" id="TIGR03591">
    <property type="entry name" value="polynuc_phos"/>
    <property type="match status" value="1"/>
</dbReference>
<dbReference type="NCBIfam" id="NF008805">
    <property type="entry name" value="PRK11824.1"/>
    <property type="match status" value="1"/>
</dbReference>
<dbReference type="PANTHER" id="PTHR11252">
    <property type="entry name" value="POLYRIBONUCLEOTIDE NUCLEOTIDYLTRANSFERASE"/>
    <property type="match status" value="1"/>
</dbReference>
<dbReference type="PANTHER" id="PTHR11252:SF0">
    <property type="entry name" value="POLYRIBONUCLEOTIDE NUCLEOTIDYLTRANSFERASE 1, MITOCHONDRIAL"/>
    <property type="match status" value="1"/>
</dbReference>
<dbReference type="Pfam" id="PF00013">
    <property type="entry name" value="KH_1"/>
    <property type="match status" value="1"/>
</dbReference>
<dbReference type="Pfam" id="PF03726">
    <property type="entry name" value="PNPase"/>
    <property type="match status" value="1"/>
</dbReference>
<dbReference type="Pfam" id="PF01138">
    <property type="entry name" value="RNase_PH"/>
    <property type="match status" value="2"/>
</dbReference>
<dbReference type="Pfam" id="PF03725">
    <property type="entry name" value="RNase_PH_C"/>
    <property type="match status" value="1"/>
</dbReference>
<dbReference type="Pfam" id="PF00575">
    <property type="entry name" value="S1"/>
    <property type="match status" value="1"/>
</dbReference>
<dbReference type="PIRSF" id="PIRSF005499">
    <property type="entry name" value="PNPase"/>
    <property type="match status" value="1"/>
</dbReference>
<dbReference type="SMART" id="SM00322">
    <property type="entry name" value="KH"/>
    <property type="match status" value="1"/>
</dbReference>
<dbReference type="SMART" id="SM00316">
    <property type="entry name" value="S1"/>
    <property type="match status" value="1"/>
</dbReference>
<dbReference type="SUPFAM" id="SSF54791">
    <property type="entry name" value="Eukaryotic type KH-domain (KH-domain type I)"/>
    <property type="match status" value="1"/>
</dbReference>
<dbReference type="SUPFAM" id="SSF50249">
    <property type="entry name" value="Nucleic acid-binding proteins"/>
    <property type="match status" value="1"/>
</dbReference>
<dbReference type="SUPFAM" id="SSF46915">
    <property type="entry name" value="Polynucleotide phosphorylase/guanosine pentaphosphate synthase (PNPase/GPSI), domain 3"/>
    <property type="match status" value="1"/>
</dbReference>
<dbReference type="SUPFAM" id="SSF55666">
    <property type="entry name" value="Ribonuclease PH domain 2-like"/>
    <property type="match status" value="2"/>
</dbReference>
<dbReference type="SUPFAM" id="SSF54211">
    <property type="entry name" value="Ribosomal protein S5 domain 2-like"/>
    <property type="match status" value="2"/>
</dbReference>
<dbReference type="PROSITE" id="PS50084">
    <property type="entry name" value="KH_TYPE_1"/>
    <property type="match status" value="1"/>
</dbReference>
<dbReference type="PROSITE" id="PS50126">
    <property type="entry name" value="S1"/>
    <property type="match status" value="1"/>
</dbReference>
<gene>
    <name evidence="1" type="primary">pnp</name>
    <name type="ordered locus">SynRCC307_0543</name>
</gene>
<sequence>MQGETRSISFDGREIRLTTRRYAPQAGGSVLIECGDTAVLVTATRANGREGIDFLPLTCDYEERLYAAGRIPGSFMRRESRPPERATLACRLIDRPIRPLFPSWMRDDLQIVATVMSVDERVPPDVLAVTGASLATLLAKIPFYGPMAAVRVGLLGDDFILNPSYREIERSELDLVVAGTAEGVVMVEAGAQQLPEEDMIEAIDFGYEAVLELIRHQKETIAELGIEQVVPEKPAEDTTVPDYLAKQCTKDIGAVLSQFTLTKAERDSQLDSIKAKAAEAIAALKETDAVRAAVSSNGKLLGNSFKALTKSMMRAQIVKDGKRVDGRSLDQVRPISAAAGVLPKRVHGSGLFQRGLTQVLSTATLGTPSDAQEMDDLNPSNEKHYLHHYNFPPYSVGETRPMRSPGRREIGHGALAERALLPVLPPKESFPYVLRVVSEVLSSNGSTSMGSVCGSTLALMDAGVPIAAPVAGAAMGLIREGSEVRVLTDIQGIEDFLGDMDFKVAGTEKGITALQMDMKITGLAMKTIGEAVTQARPARLHILEKMLEALDKPRDTMSPHAPRRLSFRIDPELIGTVIGPGGRTIKGITERTNTKIDIEDTGIVTVASHDGAAAEEAQKIIEGLTRRVSEGEYFDGKVTRVIPIGAFVEILPGKEGMIHISQLSDQRVEKVEDVVNVGDEVRVRVREIDNRGRINLTLRGVPQDGSDPQPTVILPIGES</sequence>
<protein>
    <recommendedName>
        <fullName evidence="1">Polyribonucleotide nucleotidyltransferase</fullName>
        <ecNumber evidence="1">2.7.7.8</ecNumber>
    </recommendedName>
    <alternativeName>
        <fullName evidence="1">Polynucleotide phosphorylase</fullName>
        <shortName evidence="1">PNPase</shortName>
    </alternativeName>
</protein>
<keyword id="KW-0963">Cytoplasm</keyword>
<keyword id="KW-0460">Magnesium</keyword>
<keyword id="KW-0479">Metal-binding</keyword>
<keyword id="KW-0548">Nucleotidyltransferase</keyword>
<keyword id="KW-1185">Reference proteome</keyword>
<keyword id="KW-0694">RNA-binding</keyword>
<keyword id="KW-0808">Transferase</keyword>
<accession>A5GRD7</accession>
<feature type="chain" id="PRO_0000329902" description="Polyribonucleotide nucleotidyltransferase">
    <location>
        <begin position="1"/>
        <end position="719"/>
    </location>
</feature>
<feature type="domain" description="KH" evidence="1">
    <location>
        <begin position="562"/>
        <end position="621"/>
    </location>
</feature>
<feature type="domain" description="S1 motif" evidence="1">
    <location>
        <begin position="631"/>
        <end position="699"/>
    </location>
</feature>
<feature type="region of interest" description="Disordered" evidence="2">
    <location>
        <begin position="699"/>
        <end position="719"/>
    </location>
</feature>
<feature type="binding site" evidence="1">
    <location>
        <position position="495"/>
    </location>
    <ligand>
        <name>Mg(2+)</name>
        <dbReference type="ChEBI" id="CHEBI:18420"/>
    </ligand>
</feature>
<feature type="binding site" evidence="1">
    <location>
        <position position="501"/>
    </location>
    <ligand>
        <name>Mg(2+)</name>
        <dbReference type="ChEBI" id="CHEBI:18420"/>
    </ligand>
</feature>
<name>PNP_SYNR3</name>
<evidence type="ECO:0000255" key="1">
    <source>
        <dbReference type="HAMAP-Rule" id="MF_01595"/>
    </source>
</evidence>
<evidence type="ECO:0000256" key="2">
    <source>
        <dbReference type="SAM" id="MobiDB-lite"/>
    </source>
</evidence>
<proteinExistence type="inferred from homology"/>
<reference key="1">
    <citation type="submission" date="2006-05" db="EMBL/GenBank/DDBJ databases">
        <authorList>
            <consortium name="Genoscope"/>
        </authorList>
    </citation>
    <scope>NUCLEOTIDE SEQUENCE [LARGE SCALE GENOMIC DNA]</scope>
    <source>
        <strain>RCC307</strain>
    </source>
</reference>